<protein>
    <recommendedName>
        <fullName>Conserved oligomeric Golgi complex subunit 4</fullName>
        <shortName>COG complex subunit 4</shortName>
    </recommendedName>
    <alternativeName>
        <fullName>Component of oligomeric Golgi complex 4</fullName>
    </alternativeName>
</protein>
<name>COG4_MOUSE</name>
<proteinExistence type="evidence at protein level"/>
<accession>Q8R1U1</accession>
<accession>Q3T9K1</accession>
<evidence type="ECO:0000250" key="1">
    <source>
        <dbReference type="UniProtKB" id="Q9H9E3"/>
    </source>
</evidence>
<evidence type="ECO:0000256" key="2">
    <source>
        <dbReference type="SAM" id="MobiDB-lite"/>
    </source>
</evidence>
<evidence type="ECO:0000305" key="3"/>
<keyword id="KW-0007">Acetylation</keyword>
<keyword id="KW-0963">Cytoplasm</keyword>
<keyword id="KW-0333">Golgi apparatus</keyword>
<keyword id="KW-0472">Membrane</keyword>
<keyword id="KW-0597">Phosphoprotein</keyword>
<keyword id="KW-0653">Protein transport</keyword>
<keyword id="KW-1185">Reference proteome</keyword>
<keyword id="KW-0813">Transport</keyword>
<organism>
    <name type="scientific">Mus musculus</name>
    <name type="common">Mouse</name>
    <dbReference type="NCBI Taxonomy" id="10090"/>
    <lineage>
        <taxon>Eukaryota</taxon>
        <taxon>Metazoa</taxon>
        <taxon>Chordata</taxon>
        <taxon>Craniata</taxon>
        <taxon>Vertebrata</taxon>
        <taxon>Euteleostomi</taxon>
        <taxon>Mammalia</taxon>
        <taxon>Eutheria</taxon>
        <taxon>Euarchontoglires</taxon>
        <taxon>Glires</taxon>
        <taxon>Rodentia</taxon>
        <taxon>Myomorpha</taxon>
        <taxon>Muroidea</taxon>
        <taxon>Muridae</taxon>
        <taxon>Murinae</taxon>
        <taxon>Mus</taxon>
        <taxon>Mus</taxon>
    </lineage>
</organism>
<reference key="1">
    <citation type="journal article" date="2005" name="Science">
        <title>The transcriptional landscape of the mammalian genome.</title>
        <authorList>
            <person name="Carninci P."/>
            <person name="Kasukawa T."/>
            <person name="Katayama S."/>
            <person name="Gough J."/>
            <person name="Frith M.C."/>
            <person name="Maeda N."/>
            <person name="Oyama R."/>
            <person name="Ravasi T."/>
            <person name="Lenhard B."/>
            <person name="Wells C."/>
            <person name="Kodzius R."/>
            <person name="Shimokawa K."/>
            <person name="Bajic V.B."/>
            <person name="Brenner S.E."/>
            <person name="Batalov S."/>
            <person name="Forrest A.R."/>
            <person name="Zavolan M."/>
            <person name="Davis M.J."/>
            <person name="Wilming L.G."/>
            <person name="Aidinis V."/>
            <person name="Allen J.E."/>
            <person name="Ambesi-Impiombato A."/>
            <person name="Apweiler R."/>
            <person name="Aturaliya R.N."/>
            <person name="Bailey T.L."/>
            <person name="Bansal M."/>
            <person name="Baxter L."/>
            <person name="Beisel K.W."/>
            <person name="Bersano T."/>
            <person name="Bono H."/>
            <person name="Chalk A.M."/>
            <person name="Chiu K.P."/>
            <person name="Choudhary V."/>
            <person name="Christoffels A."/>
            <person name="Clutterbuck D.R."/>
            <person name="Crowe M.L."/>
            <person name="Dalla E."/>
            <person name="Dalrymple B.P."/>
            <person name="de Bono B."/>
            <person name="Della Gatta G."/>
            <person name="di Bernardo D."/>
            <person name="Down T."/>
            <person name="Engstrom P."/>
            <person name="Fagiolini M."/>
            <person name="Faulkner G."/>
            <person name="Fletcher C.F."/>
            <person name="Fukushima T."/>
            <person name="Furuno M."/>
            <person name="Futaki S."/>
            <person name="Gariboldi M."/>
            <person name="Georgii-Hemming P."/>
            <person name="Gingeras T.R."/>
            <person name="Gojobori T."/>
            <person name="Green R.E."/>
            <person name="Gustincich S."/>
            <person name="Harbers M."/>
            <person name="Hayashi Y."/>
            <person name="Hensch T.K."/>
            <person name="Hirokawa N."/>
            <person name="Hill D."/>
            <person name="Huminiecki L."/>
            <person name="Iacono M."/>
            <person name="Ikeo K."/>
            <person name="Iwama A."/>
            <person name="Ishikawa T."/>
            <person name="Jakt M."/>
            <person name="Kanapin A."/>
            <person name="Katoh M."/>
            <person name="Kawasawa Y."/>
            <person name="Kelso J."/>
            <person name="Kitamura H."/>
            <person name="Kitano H."/>
            <person name="Kollias G."/>
            <person name="Krishnan S.P."/>
            <person name="Kruger A."/>
            <person name="Kummerfeld S.K."/>
            <person name="Kurochkin I.V."/>
            <person name="Lareau L.F."/>
            <person name="Lazarevic D."/>
            <person name="Lipovich L."/>
            <person name="Liu J."/>
            <person name="Liuni S."/>
            <person name="McWilliam S."/>
            <person name="Madan Babu M."/>
            <person name="Madera M."/>
            <person name="Marchionni L."/>
            <person name="Matsuda H."/>
            <person name="Matsuzawa S."/>
            <person name="Miki H."/>
            <person name="Mignone F."/>
            <person name="Miyake S."/>
            <person name="Morris K."/>
            <person name="Mottagui-Tabar S."/>
            <person name="Mulder N."/>
            <person name="Nakano N."/>
            <person name="Nakauchi H."/>
            <person name="Ng P."/>
            <person name="Nilsson R."/>
            <person name="Nishiguchi S."/>
            <person name="Nishikawa S."/>
            <person name="Nori F."/>
            <person name="Ohara O."/>
            <person name="Okazaki Y."/>
            <person name="Orlando V."/>
            <person name="Pang K.C."/>
            <person name="Pavan W.J."/>
            <person name="Pavesi G."/>
            <person name="Pesole G."/>
            <person name="Petrovsky N."/>
            <person name="Piazza S."/>
            <person name="Reed J."/>
            <person name="Reid J.F."/>
            <person name="Ring B.Z."/>
            <person name="Ringwald M."/>
            <person name="Rost B."/>
            <person name="Ruan Y."/>
            <person name="Salzberg S.L."/>
            <person name="Sandelin A."/>
            <person name="Schneider C."/>
            <person name="Schoenbach C."/>
            <person name="Sekiguchi K."/>
            <person name="Semple C.A."/>
            <person name="Seno S."/>
            <person name="Sessa L."/>
            <person name="Sheng Y."/>
            <person name="Shibata Y."/>
            <person name="Shimada H."/>
            <person name="Shimada K."/>
            <person name="Silva D."/>
            <person name="Sinclair B."/>
            <person name="Sperling S."/>
            <person name="Stupka E."/>
            <person name="Sugiura K."/>
            <person name="Sultana R."/>
            <person name="Takenaka Y."/>
            <person name="Taki K."/>
            <person name="Tammoja K."/>
            <person name="Tan S.L."/>
            <person name="Tang S."/>
            <person name="Taylor M.S."/>
            <person name="Tegner J."/>
            <person name="Teichmann S.A."/>
            <person name="Ueda H.R."/>
            <person name="van Nimwegen E."/>
            <person name="Verardo R."/>
            <person name="Wei C.L."/>
            <person name="Yagi K."/>
            <person name="Yamanishi H."/>
            <person name="Zabarovsky E."/>
            <person name="Zhu S."/>
            <person name="Zimmer A."/>
            <person name="Hide W."/>
            <person name="Bult C."/>
            <person name="Grimmond S.M."/>
            <person name="Teasdale R.D."/>
            <person name="Liu E.T."/>
            <person name="Brusic V."/>
            <person name="Quackenbush J."/>
            <person name="Wahlestedt C."/>
            <person name="Mattick J.S."/>
            <person name="Hume D.A."/>
            <person name="Kai C."/>
            <person name="Sasaki D."/>
            <person name="Tomaru Y."/>
            <person name="Fukuda S."/>
            <person name="Kanamori-Katayama M."/>
            <person name="Suzuki M."/>
            <person name="Aoki J."/>
            <person name="Arakawa T."/>
            <person name="Iida J."/>
            <person name="Imamura K."/>
            <person name="Itoh M."/>
            <person name="Kato T."/>
            <person name="Kawaji H."/>
            <person name="Kawagashira N."/>
            <person name="Kawashima T."/>
            <person name="Kojima M."/>
            <person name="Kondo S."/>
            <person name="Konno H."/>
            <person name="Nakano K."/>
            <person name="Ninomiya N."/>
            <person name="Nishio T."/>
            <person name="Okada M."/>
            <person name="Plessy C."/>
            <person name="Shibata K."/>
            <person name="Shiraki T."/>
            <person name="Suzuki S."/>
            <person name="Tagami M."/>
            <person name="Waki K."/>
            <person name="Watahiki A."/>
            <person name="Okamura-Oho Y."/>
            <person name="Suzuki H."/>
            <person name="Kawai J."/>
            <person name="Hayashizaki Y."/>
        </authorList>
    </citation>
    <scope>NUCLEOTIDE SEQUENCE [LARGE SCALE MRNA]</scope>
    <source>
        <strain>NOD</strain>
    </source>
</reference>
<reference key="2">
    <citation type="submission" date="2005-07" db="EMBL/GenBank/DDBJ databases">
        <authorList>
            <person name="Mural R.J."/>
            <person name="Adams M.D."/>
            <person name="Myers E.W."/>
            <person name="Smith H.O."/>
            <person name="Venter J.C."/>
        </authorList>
    </citation>
    <scope>NUCLEOTIDE SEQUENCE [LARGE SCALE GENOMIC DNA]</scope>
</reference>
<reference key="3">
    <citation type="journal article" date="2004" name="Genome Res.">
        <title>The status, quality, and expansion of the NIH full-length cDNA project: the Mammalian Gene Collection (MGC).</title>
        <authorList>
            <consortium name="The MGC Project Team"/>
        </authorList>
    </citation>
    <scope>NUCLEOTIDE SEQUENCE [LARGE SCALE MRNA]</scope>
    <source>
        <tissue>Liver</tissue>
    </source>
</reference>
<reference key="4">
    <citation type="journal article" date="2010" name="Cell">
        <title>A tissue-specific atlas of mouse protein phosphorylation and expression.</title>
        <authorList>
            <person name="Huttlin E.L."/>
            <person name="Jedrychowski M.P."/>
            <person name="Elias J.E."/>
            <person name="Goswami T."/>
            <person name="Rad R."/>
            <person name="Beausoleil S.A."/>
            <person name="Villen J."/>
            <person name="Haas W."/>
            <person name="Sowa M.E."/>
            <person name="Gygi S.P."/>
        </authorList>
    </citation>
    <scope>IDENTIFICATION BY MASS SPECTROMETRY [LARGE SCALE ANALYSIS]</scope>
    <source>
        <tissue>Brain</tissue>
        <tissue>Kidney</tissue>
        <tissue>Liver</tissue>
        <tissue>Lung</tissue>
        <tissue>Pancreas</tissue>
        <tissue>Spleen</tissue>
        <tissue>Testis</tissue>
    </source>
</reference>
<gene>
    <name type="primary">Cog4</name>
</gene>
<feature type="initiator methionine" description="Removed" evidence="1">
    <location>
        <position position="1"/>
    </location>
</feature>
<feature type="chain" id="PRO_0000213505" description="Conserved oligomeric Golgi complex subunit 4">
    <location>
        <begin position="2"/>
        <end position="785"/>
    </location>
</feature>
<feature type="region of interest" description="Disordered" evidence="2">
    <location>
        <begin position="1"/>
        <end position="24"/>
    </location>
</feature>
<feature type="region of interest" description="Interaction with SCFD1" evidence="1">
    <location>
        <begin position="2"/>
        <end position="84"/>
    </location>
</feature>
<feature type="region of interest" description="Interaction with STX5" evidence="1">
    <location>
        <begin position="85"/>
        <end position="153"/>
    </location>
</feature>
<feature type="region of interest" description="D domain" evidence="1">
    <location>
        <begin position="618"/>
        <end position="740"/>
    </location>
</feature>
<feature type="region of interest" description="E domain; essential for proper cell surface glycosylation" evidence="1">
    <location>
        <begin position="741"/>
        <end position="785"/>
    </location>
</feature>
<feature type="modified residue" description="N-acetylalanine" evidence="1">
    <location>
        <position position="2"/>
    </location>
</feature>
<feature type="modified residue" description="Phosphoserine" evidence="1">
    <location>
        <position position="6"/>
    </location>
</feature>
<dbReference type="EMBL" id="AK172465">
    <property type="protein sequence ID" value="BAE43019.1"/>
    <property type="molecule type" value="mRNA"/>
</dbReference>
<dbReference type="EMBL" id="CH466525">
    <property type="protein sequence ID" value="EDL11474.1"/>
    <property type="molecule type" value="Genomic_DNA"/>
</dbReference>
<dbReference type="EMBL" id="BC023120">
    <property type="protein sequence ID" value="AAH23120.1"/>
    <property type="molecule type" value="mRNA"/>
</dbReference>
<dbReference type="CCDS" id="CCDS40477.1"/>
<dbReference type="RefSeq" id="NP_598734.1">
    <property type="nucleotide sequence ID" value="NM_133973.2"/>
</dbReference>
<dbReference type="SMR" id="Q8R1U1"/>
<dbReference type="BioGRID" id="221844">
    <property type="interactions" value="1"/>
</dbReference>
<dbReference type="FunCoup" id="Q8R1U1">
    <property type="interactions" value="2836"/>
</dbReference>
<dbReference type="IntAct" id="Q8R1U1">
    <property type="interactions" value="1"/>
</dbReference>
<dbReference type="STRING" id="10090.ENSMUSP00000034203"/>
<dbReference type="iPTMnet" id="Q8R1U1"/>
<dbReference type="PhosphoSitePlus" id="Q8R1U1"/>
<dbReference type="SwissPalm" id="Q8R1U1"/>
<dbReference type="jPOST" id="Q8R1U1"/>
<dbReference type="PaxDb" id="10090-ENSMUSP00000034203"/>
<dbReference type="PeptideAtlas" id="Q8R1U1"/>
<dbReference type="ProteomicsDB" id="283487"/>
<dbReference type="Pumba" id="Q8R1U1"/>
<dbReference type="Antibodypedia" id="29988">
    <property type="antibodies" value="118 antibodies from 20 providers"/>
</dbReference>
<dbReference type="DNASU" id="102339"/>
<dbReference type="Ensembl" id="ENSMUST00000034203.17">
    <property type="protein sequence ID" value="ENSMUSP00000034203.10"/>
    <property type="gene ID" value="ENSMUSG00000031753.17"/>
</dbReference>
<dbReference type="GeneID" id="102339"/>
<dbReference type="KEGG" id="mmu:102339"/>
<dbReference type="UCSC" id="uc009nle.1">
    <property type="organism name" value="mouse"/>
</dbReference>
<dbReference type="AGR" id="MGI:2142808"/>
<dbReference type="CTD" id="25839"/>
<dbReference type="MGI" id="MGI:2142808">
    <property type="gene designation" value="Cog4"/>
</dbReference>
<dbReference type="VEuPathDB" id="HostDB:ENSMUSG00000031753"/>
<dbReference type="eggNOG" id="KOG0412">
    <property type="taxonomic scope" value="Eukaryota"/>
</dbReference>
<dbReference type="GeneTree" id="ENSGT00940000154065"/>
<dbReference type="InParanoid" id="Q8R1U1"/>
<dbReference type="OMA" id="RASECQQ"/>
<dbReference type="OrthoDB" id="47059at2759"/>
<dbReference type="PhylomeDB" id="Q8R1U1"/>
<dbReference type="TreeFam" id="TF105835"/>
<dbReference type="Reactome" id="R-MMU-6807878">
    <property type="pathway name" value="COPI-mediated anterograde transport"/>
</dbReference>
<dbReference type="Reactome" id="R-MMU-6811438">
    <property type="pathway name" value="Intra-Golgi traffic"/>
</dbReference>
<dbReference type="Reactome" id="R-MMU-6811440">
    <property type="pathway name" value="Retrograde transport at the Trans-Golgi-Network"/>
</dbReference>
<dbReference type="BioGRID-ORCS" id="102339">
    <property type="hits" value="16 hits in 78 CRISPR screens"/>
</dbReference>
<dbReference type="ChiTaRS" id="Cog4">
    <property type="organism name" value="mouse"/>
</dbReference>
<dbReference type="PRO" id="PR:Q8R1U1"/>
<dbReference type="Proteomes" id="UP000000589">
    <property type="component" value="Chromosome 8"/>
</dbReference>
<dbReference type="RNAct" id="Q8R1U1">
    <property type="molecule type" value="protein"/>
</dbReference>
<dbReference type="Bgee" id="ENSMUSG00000031753">
    <property type="expression patterns" value="Expressed in dorsal pancreas and 255 other cell types or tissues"/>
</dbReference>
<dbReference type="ExpressionAtlas" id="Q8R1U1">
    <property type="expression patterns" value="baseline and differential"/>
</dbReference>
<dbReference type="GO" id="GO:0005829">
    <property type="term" value="C:cytosol"/>
    <property type="evidence" value="ECO:0007669"/>
    <property type="project" value="UniProtKB-SubCell"/>
</dbReference>
<dbReference type="GO" id="GO:0000139">
    <property type="term" value="C:Golgi membrane"/>
    <property type="evidence" value="ECO:0007669"/>
    <property type="project" value="UniProtKB-SubCell"/>
</dbReference>
<dbReference type="GO" id="GO:0015031">
    <property type="term" value="P:protein transport"/>
    <property type="evidence" value="ECO:0007669"/>
    <property type="project" value="UniProtKB-KW"/>
</dbReference>
<dbReference type="FunFam" id="1.10.287.1060:FF:000002">
    <property type="entry name" value="Conserved oligomeric Golgi complex subunit 4"/>
    <property type="match status" value="1"/>
</dbReference>
<dbReference type="FunFam" id="1.20.58.1970:FF:000001">
    <property type="entry name" value="Conserved oligomeric Golgi complex subunit 4"/>
    <property type="match status" value="1"/>
</dbReference>
<dbReference type="Gene3D" id="1.20.58.1970">
    <property type="match status" value="1"/>
</dbReference>
<dbReference type="Gene3D" id="1.10.287.1060">
    <property type="entry name" value="ESAT-6-like"/>
    <property type="match status" value="1"/>
</dbReference>
<dbReference type="InterPro" id="IPR048682">
    <property type="entry name" value="COG4"/>
</dbReference>
<dbReference type="InterPro" id="IPR048684">
    <property type="entry name" value="COG4_C"/>
</dbReference>
<dbReference type="InterPro" id="IPR013167">
    <property type="entry name" value="COG4_M"/>
</dbReference>
<dbReference type="InterPro" id="IPR048680">
    <property type="entry name" value="COG4_N"/>
</dbReference>
<dbReference type="PANTHER" id="PTHR24016">
    <property type="entry name" value="CONSERVED OLIGOMERIC GOLGI COMPLEX SUBUNIT 4"/>
    <property type="match status" value="1"/>
</dbReference>
<dbReference type="PANTHER" id="PTHR24016:SF0">
    <property type="entry name" value="CONSERVED OLIGOMERIC GOLGI COMPLEX SUBUNIT 4"/>
    <property type="match status" value="1"/>
</dbReference>
<dbReference type="Pfam" id="PF20662">
    <property type="entry name" value="COG4_C"/>
    <property type="match status" value="1"/>
</dbReference>
<dbReference type="Pfam" id="PF08318">
    <property type="entry name" value="COG4_m"/>
    <property type="match status" value="1"/>
</dbReference>
<dbReference type="Pfam" id="PF20663">
    <property type="entry name" value="COG4_N"/>
    <property type="match status" value="1"/>
</dbReference>
<dbReference type="SMART" id="SM00762">
    <property type="entry name" value="Cog4"/>
    <property type="match status" value="1"/>
</dbReference>
<comment type="function">
    <text evidence="1">Required for normal Golgi function. Plays a role in SNARE-pin assembly and Golgi-to-ER retrograde transport via its interaction with SCFD1.</text>
</comment>
<comment type="subunit">
    <text evidence="1">Monomer. Component of the conserved oligomeric Golgi (COG) complex which is composed of eight different subunits and is required for normal Golgi morphology and localization. Mediates interaction of SCFD1 with the COG complex. Interacts with STX5.</text>
</comment>
<comment type="subcellular location">
    <subcellularLocation>
        <location evidence="1">Cytoplasm</location>
        <location evidence="1">Cytosol</location>
    </subcellularLocation>
    <subcellularLocation>
        <location evidence="1">Golgi apparatus membrane</location>
        <topology evidence="1">Peripheral membrane protein</topology>
        <orientation evidence="1">Cytoplasmic side</orientation>
    </subcellularLocation>
</comment>
<comment type="similarity">
    <text evidence="3">Belongs to the COG4 family.</text>
</comment>
<sequence length="785" mass="88661">MAEVESPLKLSGAPPPPEGVGGGHCSEISTELIRSLTELQELEAVYERLCGEEKAVEKELDALLEQQNTIESKMVTLHRMGPSLQLIEGDAKQLAGMITFTCSLAENVSSKVRQLDLAKNRLYQAIQRADDILDLKFCMDGVQTALRNEDYEQAAAHIHRYLCLDKSVIELSRQGKEGSMIDANLKLLQEAEQRLKAIVAEKFAIATKEGDLPQVERFFKIFPLLGLHEDGLSKFSEYLCKQVASKAEENLLLVLGSDMSDRRAAVIFADTLTLLFEGIARIVETHQPIVETYYGPGRLFTLIKYLQVECDTQVEKVVNKFIKQRDYHQQFRLVQSNLMRNSATEKIEPRELDPVLTEVTLMNARSELYLRFLRKRISADFEVGDSMASEEVKQEHQKCLDKLLNNCLLSCTMQELIGFYITMEEYFMRETVNKAVALDTYEKGQLTSSMVDDVFYIVKKCIGRALSSSNIDCLCAMINLATRELEADFRDVLCNKLRMGFPATTLQDIQRGVTSAVNIMHSSLQQGKFDTKGIESTDEAKLSFLVTLNNVEVCSENISTLKKTLESDCTKLFSQGIGGEQAQAKFDSCLSDLAAVSNKFRDLLQEGLAELNSSAVKPQVQPWINTFLSVSHSIEEEEFNDYEANDPWVQQFILNLEQQMAEFKASLSPVIYDSLTGLMTSLVAVELEKVVLKSTFNRLGGLQFDKELRSLIAYLTTVTTWTIRDKFARLSQMATILNLERVTEILDYWGANSGPLTWRLTPAEVRQVLALRIDFRNEDIKRLRL</sequence>